<organism>
    <name type="scientific">Burkholderia pseudomallei (strain K96243)</name>
    <dbReference type="NCBI Taxonomy" id="272560"/>
    <lineage>
        <taxon>Bacteria</taxon>
        <taxon>Pseudomonadati</taxon>
        <taxon>Pseudomonadota</taxon>
        <taxon>Betaproteobacteria</taxon>
        <taxon>Burkholderiales</taxon>
        <taxon>Burkholderiaceae</taxon>
        <taxon>Burkholderia</taxon>
        <taxon>pseudomallei group</taxon>
    </lineage>
</organism>
<proteinExistence type="inferred from homology"/>
<reference key="1">
    <citation type="journal article" date="2004" name="Proc. Natl. Acad. Sci. U.S.A.">
        <title>Genomic plasticity of the causative agent of melioidosis, Burkholderia pseudomallei.</title>
        <authorList>
            <person name="Holden M.T.G."/>
            <person name="Titball R.W."/>
            <person name="Peacock S.J."/>
            <person name="Cerdeno-Tarraga A.-M."/>
            <person name="Atkins T."/>
            <person name="Crossman L.C."/>
            <person name="Pitt T."/>
            <person name="Churcher C."/>
            <person name="Mungall K.L."/>
            <person name="Bentley S.D."/>
            <person name="Sebaihia M."/>
            <person name="Thomson N.R."/>
            <person name="Bason N."/>
            <person name="Beacham I.R."/>
            <person name="Brooks K."/>
            <person name="Brown K.A."/>
            <person name="Brown N.F."/>
            <person name="Challis G.L."/>
            <person name="Cherevach I."/>
            <person name="Chillingworth T."/>
            <person name="Cronin A."/>
            <person name="Crossett B."/>
            <person name="Davis P."/>
            <person name="DeShazer D."/>
            <person name="Feltwell T."/>
            <person name="Fraser A."/>
            <person name="Hance Z."/>
            <person name="Hauser H."/>
            <person name="Holroyd S."/>
            <person name="Jagels K."/>
            <person name="Keith K.E."/>
            <person name="Maddison M."/>
            <person name="Moule S."/>
            <person name="Price C."/>
            <person name="Quail M.A."/>
            <person name="Rabbinowitsch E."/>
            <person name="Rutherford K."/>
            <person name="Sanders M."/>
            <person name="Simmonds M."/>
            <person name="Songsivilai S."/>
            <person name="Stevens K."/>
            <person name="Tumapa S."/>
            <person name="Vesaratchavest M."/>
            <person name="Whitehead S."/>
            <person name="Yeats C."/>
            <person name="Barrell B.G."/>
            <person name="Oyston P.C.F."/>
            <person name="Parkhill J."/>
        </authorList>
    </citation>
    <scope>NUCLEOTIDE SEQUENCE [LARGE SCALE GENOMIC DNA]</scope>
    <source>
        <strain>K96243</strain>
    </source>
</reference>
<comment type="function">
    <text evidence="1">Catalyzes the conversion of glucosamine-6-phosphate to glucosamine-1-phosphate.</text>
</comment>
<comment type="catalytic activity">
    <reaction evidence="1">
        <text>alpha-D-glucosamine 1-phosphate = D-glucosamine 6-phosphate</text>
        <dbReference type="Rhea" id="RHEA:23424"/>
        <dbReference type="ChEBI" id="CHEBI:58516"/>
        <dbReference type="ChEBI" id="CHEBI:58725"/>
        <dbReference type="EC" id="5.4.2.10"/>
    </reaction>
</comment>
<comment type="cofactor">
    <cofactor evidence="1">
        <name>Mg(2+)</name>
        <dbReference type="ChEBI" id="CHEBI:18420"/>
    </cofactor>
    <text evidence="1">Binds 1 Mg(2+) ion per subunit.</text>
</comment>
<comment type="PTM">
    <text evidence="1">Activated by phosphorylation.</text>
</comment>
<comment type="similarity">
    <text evidence="1">Belongs to the phosphohexose mutase family.</text>
</comment>
<protein>
    <recommendedName>
        <fullName evidence="1">Phosphoglucosamine mutase</fullName>
        <ecNumber evidence="1">5.4.2.10</ecNumber>
    </recommendedName>
</protein>
<keyword id="KW-0413">Isomerase</keyword>
<keyword id="KW-0460">Magnesium</keyword>
<keyword id="KW-0479">Metal-binding</keyword>
<keyword id="KW-0597">Phosphoprotein</keyword>
<keyword id="KW-1185">Reference proteome</keyword>
<name>GLMM_BURPS</name>
<accession>Q63V83</accession>
<gene>
    <name evidence="1" type="primary">glmM</name>
    <name type="ordered locus">BPSL1358</name>
</gene>
<evidence type="ECO:0000255" key="1">
    <source>
        <dbReference type="HAMAP-Rule" id="MF_01554"/>
    </source>
</evidence>
<sequence length="452" mass="47591">MGRRYFGTDGIRGKVGDAPITPDFVLRLGYAAGKVLASAPGRAASGARPTVLIGKDTRVSGYMLEAALEAGFSAAGVDVMLAGPMPTPGVAYLTRALRLSAGVVISASHNPYHDNGIKFFSADGNKLPDEIEAEIEAWLDKPLDCAASDGLGKARRLDDAAGRYIEFCKSTFPAAFDLRGMKLVVDCAHGAAYQVAPHVFHELGADVIPIGVAPNGFNINDGVGATAPDALMRAVRANHADLGIALDGDADRLLVVDHTGRLYNGDELLYVLVKDRIATNGQVEGAVGTLMTNFAVEVALKEAGVQFVRAAVGDRYVLEQLREHGWQLGAEGSGHILSLDRHSTGDGIVSALLVLAALKRSGKTLAQMLEGVTLFPQKLINVRMKPGADWKGSDAIRRAIDSAEQALSGSGRVLIRASGTEPVLRVMVEARQATDANRHAEAIADAVKQATA</sequence>
<feature type="chain" id="PRO_0000147863" description="Phosphoglucosamine mutase">
    <location>
        <begin position="1"/>
        <end position="452"/>
    </location>
</feature>
<feature type="active site" description="Phosphoserine intermediate" evidence="1">
    <location>
        <position position="108"/>
    </location>
</feature>
<feature type="binding site" description="via phosphate group" evidence="1">
    <location>
        <position position="108"/>
    </location>
    <ligand>
        <name>Mg(2+)</name>
        <dbReference type="ChEBI" id="CHEBI:18420"/>
    </ligand>
</feature>
<feature type="binding site" evidence="1">
    <location>
        <position position="247"/>
    </location>
    <ligand>
        <name>Mg(2+)</name>
        <dbReference type="ChEBI" id="CHEBI:18420"/>
    </ligand>
</feature>
<feature type="binding site" evidence="1">
    <location>
        <position position="249"/>
    </location>
    <ligand>
        <name>Mg(2+)</name>
        <dbReference type="ChEBI" id="CHEBI:18420"/>
    </ligand>
</feature>
<feature type="binding site" evidence="1">
    <location>
        <position position="251"/>
    </location>
    <ligand>
        <name>Mg(2+)</name>
        <dbReference type="ChEBI" id="CHEBI:18420"/>
    </ligand>
</feature>
<feature type="modified residue" description="Phosphoserine" evidence="1">
    <location>
        <position position="108"/>
    </location>
</feature>
<dbReference type="EC" id="5.4.2.10" evidence="1"/>
<dbReference type="EMBL" id="BX571965">
    <property type="protein sequence ID" value="CAH35356.1"/>
    <property type="molecule type" value="Genomic_DNA"/>
</dbReference>
<dbReference type="RefSeq" id="WP_004550648.1">
    <property type="nucleotide sequence ID" value="NZ_CP009538.1"/>
</dbReference>
<dbReference type="RefSeq" id="YP_107983.1">
    <property type="nucleotide sequence ID" value="NC_006350.1"/>
</dbReference>
<dbReference type="SMR" id="Q63V83"/>
<dbReference type="STRING" id="272560.BPSL1358"/>
<dbReference type="KEGG" id="bps:BPSL1358"/>
<dbReference type="PATRIC" id="fig|272560.51.peg.122"/>
<dbReference type="eggNOG" id="COG1109">
    <property type="taxonomic scope" value="Bacteria"/>
</dbReference>
<dbReference type="Proteomes" id="UP000000605">
    <property type="component" value="Chromosome 1"/>
</dbReference>
<dbReference type="GO" id="GO:0005829">
    <property type="term" value="C:cytosol"/>
    <property type="evidence" value="ECO:0007669"/>
    <property type="project" value="TreeGrafter"/>
</dbReference>
<dbReference type="GO" id="GO:0000287">
    <property type="term" value="F:magnesium ion binding"/>
    <property type="evidence" value="ECO:0007669"/>
    <property type="project" value="UniProtKB-UniRule"/>
</dbReference>
<dbReference type="GO" id="GO:0008966">
    <property type="term" value="F:phosphoglucosamine mutase activity"/>
    <property type="evidence" value="ECO:0007669"/>
    <property type="project" value="UniProtKB-UniRule"/>
</dbReference>
<dbReference type="GO" id="GO:0004615">
    <property type="term" value="F:phosphomannomutase activity"/>
    <property type="evidence" value="ECO:0007669"/>
    <property type="project" value="TreeGrafter"/>
</dbReference>
<dbReference type="GO" id="GO:0005975">
    <property type="term" value="P:carbohydrate metabolic process"/>
    <property type="evidence" value="ECO:0007669"/>
    <property type="project" value="InterPro"/>
</dbReference>
<dbReference type="GO" id="GO:0009252">
    <property type="term" value="P:peptidoglycan biosynthetic process"/>
    <property type="evidence" value="ECO:0007669"/>
    <property type="project" value="TreeGrafter"/>
</dbReference>
<dbReference type="GO" id="GO:0006048">
    <property type="term" value="P:UDP-N-acetylglucosamine biosynthetic process"/>
    <property type="evidence" value="ECO:0007669"/>
    <property type="project" value="TreeGrafter"/>
</dbReference>
<dbReference type="CDD" id="cd05802">
    <property type="entry name" value="GlmM"/>
    <property type="match status" value="1"/>
</dbReference>
<dbReference type="FunFam" id="3.30.310.50:FF:000001">
    <property type="entry name" value="Phosphoglucosamine mutase"/>
    <property type="match status" value="1"/>
</dbReference>
<dbReference type="FunFam" id="3.40.120.10:FF:000001">
    <property type="entry name" value="Phosphoglucosamine mutase"/>
    <property type="match status" value="1"/>
</dbReference>
<dbReference type="FunFam" id="3.40.120.10:FF:000003">
    <property type="entry name" value="Phosphoglucosamine mutase"/>
    <property type="match status" value="1"/>
</dbReference>
<dbReference type="Gene3D" id="3.40.120.10">
    <property type="entry name" value="Alpha-D-Glucose-1,6-Bisphosphate, subunit A, domain 3"/>
    <property type="match status" value="3"/>
</dbReference>
<dbReference type="Gene3D" id="3.30.310.50">
    <property type="entry name" value="Alpha-D-phosphohexomutase, C-terminal domain"/>
    <property type="match status" value="1"/>
</dbReference>
<dbReference type="HAMAP" id="MF_01554_B">
    <property type="entry name" value="GlmM_B"/>
    <property type="match status" value="1"/>
</dbReference>
<dbReference type="InterPro" id="IPR005844">
    <property type="entry name" value="A-D-PHexomutase_a/b/a-I"/>
</dbReference>
<dbReference type="InterPro" id="IPR016055">
    <property type="entry name" value="A-D-PHexomutase_a/b/a-I/II/III"/>
</dbReference>
<dbReference type="InterPro" id="IPR005845">
    <property type="entry name" value="A-D-PHexomutase_a/b/a-II"/>
</dbReference>
<dbReference type="InterPro" id="IPR005846">
    <property type="entry name" value="A-D-PHexomutase_a/b/a-III"/>
</dbReference>
<dbReference type="InterPro" id="IPR005843">
    <property type="entry name" value="A-D-PHexomutase_C"/>
</dbReference>
<dbReference type="InterPro" id="IPR036900">
    <property type="entry name" value="A-D-PHexomutase_C_sf"/>
</dbReference>
<dbReference type="InterPro" id="IPR016066">
    <property type="entry name" value="A-D-PHexomutase_CS"/>
</dbReference>
<dbReference type="InterPro" id="IPR005841">
    <property type="entry name" value="Alpha-D-phosphohexomutase_SF"/>
</dbReference>
<dbReference type="InterPro" id="IPR006352">
    <property type="entry name" value="GlmM_bact"/>
</dbReference>
<dbReference type="InterPro" id="IPR050060">
    <property type="entry name" value="Phosphoglucosamine_mutase"/>
</dbReference>
<dbReference type="NCBIfam" id="TIGR01455">
    <property type="entry name" value="glmM"/>
    <property type="match status" value="1"/>
</dbReference>
<dbReference type="NCBIfam" id="NF008139">
    <property type="entry name" value="PRK10887.1"/>
    <property type="match status" value="1"/>
</dbReference>
<dbReference type="PANTHER" id="PTHR42946:SF1">
    <property type="entry name" value="PHOSPHOGLUCOMUTASE (ALPHA-D-GLUCOSE-1,6-BISPHOSPHATE-DEPENDENT)"/>
    <property type="match status" value="1"/>
</dbReference>
<dbReference type="PANTHER" id="PTHR42946">
    <property type="entry name" value="PHOSPHOHEXOSE MUTASE"/>
    <property type="match status" value="1"/>
</dbReference>
<dbReference type="Pfam" id="PF02878">
    <property type="entry name" value="PGM_PMM_I"/>
    <property type="match status" value="1"/>
</dbReference>
<dbReference type="Pfam" id="PF02879">
    <property type="entry name" value="PGM_PMM_II"/>
    <property type="match status" value="1"/>
</dbReference>
<dbReference type="Pfam" id="PF02880">
    <property type="entry name" value="PGM_PMM_III"/>
    <property type="match status" value="1"/>
</dbReference>
<dbReference type="Pfam" id="PF00408">
    <property type="entry name" value="PGM_PMM_IV"/>
    <property type="match status" value="1"/>
</dbReference>
<dbReference type="PRINTS" id="PR00509">
    <property type="entry name" value="PGMPMM"/>
</dbReference>
<dbReference type="SUPFAM" id="SSF55957">
    <property type="entry name" value="Phosphoglucomutase, C-terminal domain"/>
    <property type="match status" value="1"/>
</dbReference>
<dbReference type="SUPFAM" id="SSF53738">
    <property type="entry name" value="Phosphoglucomutase, first 3 domains"/>
    <property type="match status" value="3"/>
</dbReference>
<dbReference type="PROSITE" id="PS00710">
    <property type="entry name" value="PGM_PMM"/>
    <property type="match status" value="1"/>
</dbReference>